<accession>Q8TBB5</accession>
<accession>D3DUN3</accession>
<accession>D3DUN4</accession>
<accession>D3DUN5</accession>
<accession>Q96F29</accession>
<accession>Q9BVN3</accession>
<proteinExistence type="evidence at protein level"/>
<protein>
    <recommendedName>
        <fullName>Kelch domain-containing protein 4</fullName>
    </recommendedName>
</protein>
<keyword id="KW-0025">Alternative splicing</keyword>
<keyword id="KW-0880">Kelch repeat</keyword>
<keyword id="KW-0597">Phosphoprotein</keyword>
<keyword id="KW-1267">Proteomics identification</keyword>
<keyword id="KW-1185">Reference proteome</keyword>
<keyword id="KW-0677">Repeat</keyword>
<dbReference type="EMBL" id="CH471114">
    <property type="protein sequence ID" value="EAW95377.1"/>
    <property type="molecule type" value="Genomic_DNA"/>
</dbReference>
<dbReference type="EMBL" id="CH471114">
    <property type="protein sequence ID" value="EAW95378.1"/>
    <property type="molecule type" value="Genomic_DNA"/>
</dbReference>
<dbReference type="EMBL" id="CH471114">
    <property type="protein sequence ID" value="EAW95379.1"/>
    <property type="molecule type" value="Genomic_DNA"/>
</dbReference>
<dbReference type="EMBL" id="CH471114">
    <property type="protein sequence ID" value="EAW95381.1"/>
    <property type="molecule type" value="Genomic_DNA"/>
</dbReference>
<dbReference type="EMBL" id="CH471114">
    <property type="protein sequence ID" value="EAW95382.1"/>
    <property type="molecule type" value="Genomic_DNA"/>
</dbReference>
<dbReference type="EMBL" id="CH471114">
    <property type="protein sequence ID" value="EAW95383.1"/>
    <property type="molecule type" value="Genomic_DNA"/>
</dbReference>
<dbReference type="EMBL" id="BC001044">
    <property type="protein sequence ID" value="AAH01044.1"/>
    <property type="molecule type" value="mRNA"/>
</dbReference>
<dbReference type="EMBL" id="BC011680">
    <property type="protein sequence ID" value="AAH11680.1"/>
    <property type="molecule type" value="mRNA"/>
</dbReference>
<dbReference type="EMBL" id="BC022969">
    <property type="protein sequence ID" value="AAH22969.1"/>
    <property type="molecule type" value="mRNA"/>
</dbReference>
<dbReference type="CCDS" id="CCDS10963.1">
    <molecule id="Q8TBB5-1"/>
</dbReference>
<dbReference type="CCDS" id="CCDS54050.1">
    <molecule id="Q8TBB5-2"/>
</dbReference>
<dbReference type="CCDS" id="CCDS54051.1">
    <molecule id="Q8TBB5-3"/>
</dbReference>
<dbReference type="RefSeq" id="NP_001171783.1">
    <molecule id="Q8TBB5-2"/>
    <property type="nucleotide sequence ID" value="NM_001184854.2"/>
</dbReference>
<dbReference type="RefSeq" id="NP_001171785.1">
    <molecule id="Q8TBB5-3"/>
    <property type="nucleotide sequence ID" value="NM_001184856.2"/>
</dbReference>
<dbReference type="RefSeq" id="NP_060036.2">
    <molecule id="Q8TBB5-1"/>
    <property type="nucleotide sequence ID" value="NM_017566.3"/>
</dbReference>
<dbReference type="RefSeq" id="XP_005256051.1">
    <property type="nucleotide sequence ID" value="XM_005255994.3"/>
</dbReference>
<dbReference type="RefSeq" id="XP_016878833.1">
    <property type="nucleotide sequence ID" value="XM_017023344.1"/>
</dbReference>
<dbReference type="SMR" id="Q8TBB5"/>
<dbReference type="BioGRID" id="120134">
    <property type="interactions" value="37"/>
</dbReference>
<dbReference type="FunCoup" id="Q8TBB5">
    <property type="interactions" value="1757"/>
</dbReference>
<dbReference type="IntAct" id="Q8TBB5">
    <property type="interactions" value="21"/>
</dbReference>
<dbReference type="MINT" id="Q8TBB5"/>
<dbReference type="STRING" id="9606.ENSP00000270583"/>
<dbReference type="GlyGen" id="Q8TBB5">
    <property type="glycosylation" value="3 sites, 1 O-linked glycan (1 site)"/>
</dbReference>
<dbReference type="iPTMnet" id="Q8TBB5"/>
<dbReference type="PhosphoSitePlus" id="Q8TBB5"/>
<dbReference type="BioMuta" id="KLHDC4"/>
<dbReference type="DMDM" id="74730447"/>
<dbReference type="jPOST" id="Q8TBB5"/>
<dbReference type="MassIVE" id="Q8TBB5"/>
<dbReference type="PaxDb" id="9606-ENSP00000270583"/>
<dbReference type="PeptideAtlas" id="Q8TBB5"/>
<dbReference type="ProteomicsDB" id="73984">
    <molecule id="Q8TBB5-1"/>
</dbReference>
<dbReference type="ProteomicsDB" id="73985">
    <molecule id="Q8TBB5-2"/>
</dbReference>
<dbReference type="ProteomicsDB" id="73986">
    <molecule id="Q8TBB5-3"/>
</dbReference>
<dbReference type="Pumba" id="Q8TBB5"/>
<dbReference type="Antibodypedia" id="30690">
    <property type="antibodies" value="159 antibodies from 25 providers"/>
</dbReference>
<dbReference type="DNASU" id="54758"/>
<dbReference type="Ensembl" id="ENST00000270583.10">
    <molecule id="Q8TBB5-1"/>
    <property type="protein sequence ID" value="ENSP00000270583.4"/>
    <property type="gene ID" value="ENSG00000104731.14"/>
</dbReference>
<dbReference type="Ensembl" id="ENST00000347925.9">
    <molecule id="Q8TBB5-3"/>
    <property type="protein sequence ID" value="ENSP00000325717.5"/>
    <property type="gene ID" value="ENSG00000104731.14"/>
</dbReference>
<dbReference type="Ensembl" id="ENST00000353170.9">
    <molecule id="Q8TBB5-2"/>
    <property type="protein sequence ID" value="ENSP00000262530.5"/>
    <property type="gene ID" value="ENSG00000104731.14"/>
</dbReference>
<dbReference type="Ensembl" id="ENST00000567298.5">
    <molecule id="Q8TBB5-1"/>
    <property type="protein sequence ID" value="ENSP00000457570.1"/>
    <property type="gene ID" value="ENSG00000104731.14"/>
</dbReference>
<dbReference type="GeneID" id="54758"/>
<dbReference type="KEGG" id="hsa:54758"/>
<dbReference type="MANE-Select" id="ENST00000270583.10">
    <property type="protein sequence ID" value="ENSP00000270583.4"/>
    <property type="RefSeq nucleotide sequence ID" value="NM_017566.4"/>
    <property type="RefSeq protein sequence ID" value="NP_060036.2"/>
</dbReference>
<dbReference type="UCSC" id="uc002fki.4">
    <molecule id="Q8TBB5-1"/>
    <property type="organism name" value="human"/>
</dbReference>
<dbReference type="AGR" id="HGNC:25272"/>
<dbReference type="CTD" id="54758"/>
<dbReference type="DisGeNET" id="54758"/>
<dbReference type="GeneCards" id="KLHDC4"/>
<dbReference type="HGNC" id="HGNC:25272">
    <property type="gene designation" value="KLHDC4"/>
</dbReference>
<dbReference type="HPA" id="ENSG00000104731">
    <property type="expression patterns" value="Low tissue specificity"/>
</dbReference>
<dbReference type="MIM" id="620518">
    <property type="type" value="gene"/>
</dbReference>
<dbReference type="neXtProt" id="NX_Q8TBB5"/>
<dbReference type="OpenTargets" id="ENSG00000104731"/>
<dbReference type="PharmGKB" id="PA134914472"/>
<dbReference type="VEuPathDB" id="HostDB:ENSG00000104731"/>
<dbReference type="eggNOG" id="KOG1230">
    <property type="taxonomic scope" value="Eukaryota"/>
</dbReference>
<dbReference type="GeneTree" id="ENSGT00390000003374"/>
<dbReference type="HOGENOM" id="CLU_008722_3_1_1"/>
<dbReference type="InParanoid" id="Q8TBB5"/>
<dbReference type="OMA" id="PSPRVGC"/>
<dbReference type="OrthoDB" id="4447at2759"/>
<dbReference type="PAN-GO" id="Q8TBB5">
    <property type="GO annotations" value="0 GO annotations based on evolutionary models"/>
</dbReference>
<dbReference type="PhylomeDB" id="Q8TBB5"/>
<dbReference type="TreeFam" id="TF323290"/>
<dbReference type="PathwayCommons" id="Q8TBB5"/>
<dbReference type="SignaLink" id="Q8TBB5"/>
<dbReference type="BioGRID-ORCS" id="54758">
    <property type="hits" value="11 hits in 1153 CRISPR screens"/>
</dbReference>
<dbReference type="ChiTaRS" id="KLHDC4">
    <property type="organism name" value="human"/>
</dbReference>
<dbReference type="GenomeRNAi" id="54758"/>
<dbReference type="Pharos" id="Q8TBB5">
    <property type="development level" value="Tdark"/>
</dbReference>
<dbReference type="PRO" id="PR:Q8TBB5"/>
<dbReference type="Proteomes" id="UP000005640">
    <property type="component" value="Chromosome 16"/>
</dbReference>
<dbReference type="RNAct" id="Q8TBB5">
    <property type="molecule type" value="protein"/>
</dbReference>
<dbReference type="Bgee" id="ENSG00000104731">
    <property type="expression patterns" value="Expressed in sural nerve and 129 other cell types or tissues"/>
</dbReference>
<dbReference type="ExpressionAtlas" id="Q8TBB5">
    <property type="expression patterns" value="baseline and differential"/>
</dbReference>
<dbReference type="Gene3D" id="2.120.10.80">
    <property type="entry name" value="Kelch-type beta propeller"/>
    <property type="match status" value="2"/>
</dbReference>
<dbReference type="InterPro" id="IPR015915">
    <property type="entry name" value="Kelch-typ_b-propeller"/>
</dbReference>
<dbReference type="InterPro" id="IPR052588">
    <property type="entry name" value="Kelch_domain_protein"/>
</dbReference>
<dbReference type="PANTHER" id="PTHR46063">
    <property type="entry name" value="KELCH DOMAIN-CONTAINING PROTEIN"/>
    <property type="match status" value="1"/>
</dbReference>
<dbReference type="PANTHER" id="PTHR46063:SF1">
    <property type="entry name" value="KELCH DOMAIN-CONTAINING PROTEIN 4"/>
    <property type="match status" value="1"/>
</dbReference>
<dbReference type="Pfam" id="PF24681">
    <property type="entry name" value="Kelch_KLHDC2_KLHL20_DRC7"/>
    <property type="match status" value="1"/>
</dbReference>
<dbReference type="SUPFAM" id="SSF117281">
    <property type="entry name" value="Kelch motif"/>
    <property type="match status" value="2"/>
</dbReference>
<gene>
    <name type="primary">KLHDC4</name>
</gene>
<organism>
    <name type="scientific">Homo sapiens</name>
    <name type="common">Human</name>
    <dbReference type="NCBI Taxonomy" id="9606"/>
    <lineage>
        <taxon>Eukaryota</taxon>
        <taxon>Metazoa</taxon>
        <taxon>Chordata</taxon>
        <taxon>Craniata</taxon>
        <taxon>Vertebrata</taxon>
        <taxon>Euteleostomi</taxon>
        <taxon>Mammalia</taxon>
        <taxon>Eutheria</taxon>
        <taxon>Euarchontoglires</taxon>
        <taxon>Primates</taxon>
        <taxon>Haplorrhini</taxon>
        <taxon>Catarrhini</taxon>
        <taxon>Hominidae</taxon>
        <taxon>Homo</taxon>
    </lineage>
</organism>
<feature type="chain" id="PRO_0000228998" description="Kelch domain-containing protein 4">
    <location>
        <begin position="1"/>
        <end position="520"/>
    </location>
</feature>
<feature type="repeat" description="Kelch 1">
    <location>
        <begin position="77"/>
        <end position="129"/>
    </location>
</feature>
<feature type="repeat" description="Kelch 2">
    <location>
        <begin position="133"/>
        <end position="187"/>
    </location>
</feature>
<feature type="repeat" description="Kelch 3">
    <location>
        <begin position="188"/>
        <end position="241"/>
    </location>
</feature>
<feature type="repeat" description="Kelch 4">
    <location>
        <begin position="243"/>
        <end position="289"/>
    </location>
</feature>
<feature type="repeat" description="Kelch 5">
    <location>
        <begin position="308"/>
        <end position="361"/>
    </location>
</feature>
<feature type="repeat" description="Kelch 6">
    <location>
        <begin position="443"/>
        <end position="494"/>
    </location>
</feature>
<feature type="region of interest" description="Disordered" evidence="1">
    <location>
        <begin position="1"/>
        <end position="33"/>
    </location>
</feature>
<feature type="region of interest" description="Disordered" evidence="1">
    <location>
        <begin position="346"/>
        <end position="379"/>
    </location>
</feature>
<feature type="region of interest" description="Disordered" evidence="1">
    <location>
        <begin position="402"/>
        <end position="431"/>
    </location>
</feature>
<feature type="region of interest" description="Disordered" evidence="1">
    <location>
        <begin position="481"/>
        <end position="520"/>
    </location>
</feature>
<feature type="compositionally biased region" description="Basic residues" evidence="1">
    <location>
        <begin position="1"/>
        <end position="10"/>
    </location>
</feature>
<feature type="compositionally biased region" description="Basic and acidic residues" evidence="1">
    <location>
        <begin position="11"/>
        <end position="24"/>
    </location>
</feature>
<feature type="modified residue" description="Phosphoserine" evidence="4 5 6 7">
    <location>
        <position position="413"/>
    </location>
</feature>
<feature type="modified residue" description="Phosphoserine" evidence="4 5 6 7 8">
    <location>
        <position position="418"/>
    </location>
</feature>
<feature type="splice variant" id="VSP_017728" description="In isoform 2." evidence="3">
    <location>
        <begin position="34"/>
        <end position="90"/>
    </location>
</feature>
<feature type="splice variant" id="VSP_017729" description="In isoform 3." evidence="3">
    <location>
        <begin position="170"/>
        <end position="200"/>
    </location>
</feature>
<feature type="sequence variant" id="VAR_033986" description="In dbSNP:rs2303772.">
    <original>L</original>
    <variation>V</variation>
    <location>
        <position position="56"/>
    </location>
</feature>
<feature type="sequence variant" id="VAR_050054" description="In dbSNP:rs2303771." evidence="2">
    <original>T</original>
    <variation>I</variation>
    <location>
        <position position="102"/>
    </location>
</feature>
<feature type="sequence variant" id="VAR_061340" description="In dbSNP:rs34779002.">
    <original>G</original>
    <variation>V</variation>
    <location>
        <position position="130"/>
    </location>
</feature>
<feature type="sequence variant" id="VAR_033987" description="In dbSNP:rs3751727.">
    <original>L</original>
    <variation>V</variation>
    <location>
        <position position="155"/>
    </location>
</feature>
<sequence length="520" mass="57892">MGKKGKKEKKGRGAEKTAAKMEKKVSKRSRKEEEDLEALIAHFQTLDAKRTQTVELPCPPPSPRLNASLSVHPEKDELILFGGEYFNGQKTFLYNELYVYNTRKDTWTKVDIPSPPPRRCAHQAVVVPQGGGQLWVFGGEFASPNGEQFYHYKDLWVLHLATKTWEQVKSTGGPSGRSGHRMVAWKRQLILFGGFHESTRDYIYYNDVYAFNLDTFTWSKLSPSGTGPTPRSGCQMSVTPQGGIVVYGGYSKQRVKKDVDKGTRHSDMFLLKPEDGREDKWVWTRMNPSGVKPTPRSGFSVAMAPNHQTLFFGGVCDEEEEESLSGEFFNDLYFYDATRNRWFEGQLKGPKSEKKKRRRGRKEEPEGGSRPACGGAGTQGPVQLVKEVVAEDGTVVTIKQVLTAPGSAGQPRSEDEDSLEEAGSPAPGPCPRSNAMLAVKHGVLYVYGGMFEAGDRQVTLSDLHCLDLHRMEAWKALVEMDPETQEWLEETDSEEDSEEVEGAEGGVDDEDSGEESGAED</sequence>
<comment type="interaction">
    <interactant intactId="EBI-8472352">
        <id>Q8TBB5</id>
    </interactant>
    <interactant intactId="EBI-742887">
        <id>Q8TAP6</id>
        <label>CEP76</label>
    </interactant>
    <organismsDiffer>false</organismsDiffer>
    <experiments>3</experiments>
</comment>
<comment type="interaction">
    <interactant intactId="EBI-8472352">
        <id>Q8TBB5</id>
    </interactant>
    <interactant intactId="EBI-710124">
        <id>O60341</id>
        <label>KDM1A</label>
    </interactant>
    <organismsDiffer>false</organismsDiffer>
    <experiments>2</experiments>
</comment>
<comment type="interaction">
    <interactant intactId="EBI-8472352">
        <id>Q8TBB5</id>
    </interactant>
    <interactant intactId="EBI-349968">
        <id>O43463</id>
        <label>SUV39H1</label>
    </interactant>
    <organismsDiffer>false</organismsDiffer>
    <experiments>2</experiments>
</comment>
<comment type="interaction">
    <interactant intactId="EBI-8472352">
        <id>Q8TBB5</id>
    </interactant>
    <interactant intactId="EBI-723127">
        <id>Q9H5I1</id>
        <label>SUV39H2</label>
    </interactant>
    <organismsDiffer>false</organismsDiffer>
    <experiments>2</experiments>
</comment>
<comment type="interaction">
    <interactant intactId="EBI-8472352">
        <id>Q8TBB5</id>
    </interactant>
    <interactant intactId="EBI-710997">
        <id>P54274</id>
        <label>TERF1</label>
    </interactant>
    <organismsDiffer>false</organismsDiffer>
    <experiments>2</experiments>
</comment>
<comment type="interaction">
    <interactant intactId="EBI-21838933">
        <id>Q8TBB5-2</id>
    </interactant>
    <interactant intactId="EBI-718729">
        <id>P55212</id>
        <label>CASP6</label>
    </interactant>
    <organismsDiffer>false</organismsDiffer>
    <experiments>3</experiments>
</comment>
<comment type="interaction">
    <interactant intactId="EBI-21838933">
        <id>Q8TBB5-2</id>
    </interactant>
    <interactant intactId="EBI-21591415">
        <id>P13473-2</id>
        <label>LAMP2</label>
    </interactant>
    <organismsDiffer>false</organismsDiffer>
    <experiments>3</experiments>
</comment>
<comment type="interaction">
    <interactant intactId="EBI-21838933">
        <id>Q8TBB5-2</id>
    </interactant>
    <interactant intactId="EBI-5280197">
        <id>O75400-2</id>
        <label>PRPF40A</label>
    </interactant>
    <organismsDiffer>false</organismsDiffer>
    <experiments>3</experiments>
</comment>
<comment type="interaction">
    <interactant intactId="EBI-21838933">
        <id>Q8TBB5-2</id>
    </interactant>
    <interactant intactId="EBI-286642">
        <id>P62826</id>
        <label>RAN</label>
    </interactant>
    <organismsDiffer>false</organismsDiffer>
    <experiments>3</experiments>
</comment>
<comment type="alternative products">
    <event type="alternative splicing"/>
    <isoform>
        <id>Q8TBB5-1</id>
        <name>1</name>
        <sequence type="displayed"/>
    </isoform>
    <isoform>
        <id>Q8TBB5-2</id>
        <name>2</name>
        <sequence type="described" ref="VSP_017728"/>
    </isoform>
    <isoform>
        <id>Q8TBB5-3</id>
        <name>3</name>
        <sequence type="described" ref="VSP_017729"/>
    </isoform>
</comment>
<name>KLDC4_HUMAN</name>
<evidence type="ECO:0000256" key="1">
    <source>
        <dbReference type="SAM" id="MobiDB-lite"/>
    </source>
</evidence>
<evidence type="ECO:0000269" key="2">
    <source>
    </source>
</evidence>
<evidence type="ECO:0000303" key="3">
    <source>
    </source>
</evidence>
<evidence type="ECO:0007744" key="4">
    <source>
    </source>
</evidence>
<evidence type="ECO:0007744" key="5">
    <source>
    </source>
</evidence>
<evidence type="ECO:0007744" key="6">
    <source>
    </source>
</evidence>
<evidence type="ECO:0007744" key="7">
    <source>
    </source>
</evidence>
<evidence type="ECO:0007744" key="8">
    <source>
    </source>
</evidence>
<reference key="1">
    <citation type="submission" date="2005-09" db="EMBL/GenBank/DDBJ databases">
        <authorList>
            <person name="Mural R.J."/>
            <person name="Istrail S."/>
            <person name="Sutton G.G."/>
            <person name="Florea L."/>
            <person name="Halpern A.L."/>
            <person name="Mobarry C.M."/>
            <person name="Lippert R."/>
            <person name="Walenz B."/>
            <person name="Shatkay H."/>
            <person name="Dew I."/>
            <person name="Miller J.R."/>
            <person name="Flanigan M.J."/>
            <person name="Edwards N.J."/>
            <person name="Bolanos R."/>
            <person name="Fasulo D."/>
            <person name="Halldorsson B.V."/>
            <person name="Hannenhalli S."/>
            <person name="Turner R."/>
            <person name="Yooseph S."/>
            <person name="Lu F."/>
            <person name="Nusskern D.R."/>
            <person name="Shue B.C."/>
            <person name="Zheng X.H."/>
            <person name="Zhong F."/>
            <person name="Delcher A.L."/>
            <person name="Huson D.H."/>
            <person name="Kravitz S.A."/>
            <person name="Mouchard L."/>
            <person name="Reinert K."/>
            <person name="Remington K.A."/>
            <person name="Clark A.G."/>
            <person name="Waterman M.S."/>
            <person name="Eichler E.E."/>
            <person name="Adams M.D."/>
            <person name="Hunkapiller M.W."/>
            <person name="Myers E.W."/>
            <person name="Venter J.C."/>
        </authorList>
    </citation>
    <scope>NUCLEOTIDE SEQUENCE [LARGE SCALE GENOMIC DNA]</scope>
</reference>
<reference key="2">
    <citation type="journal article" date="2004" name="Genome Res.">
        <title>The status, quality, and expansion of the NIH full-length cDNA project: the Mammalian Gene Collection (MGC).</title>
        <authorList>
            <consortium name="The MGC Project Team"/>
        </authorList>
    </citation>
    <scope>NUCLEOTIDE SEQUENCE [LARGE SCALE MRNA] (ISOFORMS 1; 2 AND 3)</scope>
    <scope>VARIANT ILE-102</scope>
    <source>
        <tissue>Cervix</tissue>
        <tissue>Placenta</tissue>
        <tissue>Uterus</tissue>
    </source>
</reference>
<reference key="3">
    <citation type="journal article" date="2006" name="Cell">
        <title>Global, in vivo, and site-specific phosphorylation dynamics in signaling networks.</title>
        <authorList>
            <person name="Olsen J.V."/>
            <person name="Blagoev B."/>
            <person name="Gnad F."/>
            <person name="Macek B."/>
            <person name="Kumar C."/>
            <person name="Mortensen P."/>
            <person name="Mann M."/>
        </authorList>
    </citation>
    <scope>PHOSPHORYLATION [LARGE SCALE ANALYSIS] AT SER-413 AND SER-418</scope>
    <scope>IDENTIFICATION BY MASS SPECTROMETRY [LARGE SCALE ANALYSIS]</scope>
    <source>
        <tissue>Cervix carcinoma</tissue>
    </source>
</reference>
<reference key="4">
    <citation type="journal article" date="2008" name="J. Proteome Res.">
        <title>Combining protein-based IMAC, peptide-based IMAC, and MudPIT for efficient phosphoproteomic analysis.</title>
        <authorList>
            <person name="Cantin G.T."/>
            <person name="Yi W."/>
            <person name="Lu B."/>
            <person name="Park S.K."/>
            <person name="Xu T."/>
            <person name="Lee J.-D."/>
            <person name="Yates J.R. III"/>
        </authorList>
    </citation>
    <scope>PHOSPHORYLATION [LARGE SCALE ANALYSIS] AT SER-413 AND SER-418</scope>
    <scope>IDENTIFICATION BY MASS SPECTROMETRY [LARGE SCALE ANALYSIS]</scope>
    <source>
        <tissue>Cervix carcinoma</tissue>
    </source>
</reference>
<reference key="5">
    <citation type="journal article" date="2008" name="Proc. Natl. Acad. Sci. U.S.A.">
        <title>A quantitative atlas of mitotic phosphorylation.</title>
        <authorList>
            <person name="Dephoure N."/>
            <person name="Zhou C."/>
            <person name="Villen J."/>
            <person name="Beausoleil S.A."/>
            <person name="Bakalarski C.E."/>
            <person name="Elledge S.J."/>
            <person name="Gygi S.P."/>
        </authorList>
    </citation>
    <scope>PHOSPHORYLATION [LARGE SCALE ANALYSIS] AT SER-413 AND SER-418</scope>
    <scope>IDENTIFICATION BY MASS SPECTROMETRY [LARGE SCALE ANALYSIS]</scope>
    <source>
        <tissue>Cervix carcinoma</tissue>
    </source>
</reference>
<reference key="6">
    <citation type="journal article" date="2009" name="Anal. Chem.">
        <title>Lys-N and trypsin cover complementary parts of the phosphoproteome in a refined SCX-based approach.</title>
        <authorList>
            <person name="Gauci S."/>
            <person name="Helbig A.O."/>
            <person name="Slijper M."/>
            <person name="Krijgsveld J."/>
            <person name="Heck A.J."/>
            <person name="Mohammed S."/>
        </authorList>
    </citation>
    <scope>IDENTIFICATION BY MASS SPECTROMETRY [LARGE SCALE ANALYSIS]</scope>
</reference>
<reference key="7">
    <citation type="journal article" date="2011" name="Sci. Signal.">
        <title>System-wide temporal characterization of the proteome and phosphoproteome of human embryonic stem cell differentiation.</title>
        <authorList>
            <person name="Rigbolt K.T."/>
            <person name="Prokhorova T.A."/>
            <person name="Akimov V."/>
            <person name="Henningsen J."/>
            <person name="Johansen P.T."/>
            <person name="Kratchmarova I."/>
            <person name="Kassem M."/>
            <person name="Mann M."/>
            <person name="Olsen J.V."/>
            <person name="Blagoev B."/>
        </authorList>
    </citation>
    <scope>PHOSPHORYLATION [LARGE SCALE ANALYSIS] AT SER-413 AND SER-418</scope>
    <scope>IDENTIFICATION BY MASS SPECTROMETRY [LARGE SCALE ANALYSIS]</scope>
</reference>
<reference key="8">
    <citation type="journal article" date="2013" name="J. Proteome Res.">
        <title>Toward a comprehensive characterization of a human cancer cell phosphoproteome.</title>
        <authorList>
            <person name="Zhou H."/>
            <person name="Di Palma S."/>
            <person name="Preisinger C."/>
            <person name="Peng M."/>
            <person name="Polat A.N."/>
            <person name="Heck A.J."/>
            <person name="Mohammed S."/>
        </authorList>
    </citation>
    <scope>PHOSPHORYLATION [LARGE SCALE ANALYSIS] AT SER-418</scope>
    <scope>IDENTIFICATION BY MASS SPECTROMETRY [LARGE SCALE ANALYSIS]</scope>
    <source>
        <tissue>Erythroleukemia</tissue>
    </source>
</reference>